<sequence length="365" mass="40996">MFEVNPVKFKIKDLADRTLLLRGIFDYDAKKERLEEVSAELESSEVWNNPENAQALGKERSALELVVKTIDDMDSGLEDVEGLVELAVEEEDEETFADASSELDALEKRLEELEFRRMFSGPHDISDCYLDIQSGSGGTEAQDWANMVLRMFLRWGEAHDYKPELIEVTDGDVAGIKGATIKFTGEYAFGSLRTETGVHRLVRKSPFDSSGKRHTSFCSVFVYPEIDDSIEIDINPSDLRIDTYRASGAGGQHVNKTESAIRITHVPTNTVVQCQNDRSQHKNRDAAMKQLKAKLYELEMLKQNADKQQAEDAKSDIGWGSQIRSYVLDDARIKDLRTGVESRNTQSVLDGDLDKFIEASLKSGL</sequence>
<dbReference type="EMBL" id="CP000961">
    <property type="protein sequence ID" value="ACA85232.1"/>
    <property type="molecule type" value="Genomic_DNA"/>
</dbReference>
<dbReference type="SMR" id="B1KFR6"/>
<dbReference type="STRING" id="392500.Swoo_0939"/>
<dbReference type="KEGG" id="swd:Swoo_0939"/>
<dbReference type="eggNOG" id="COG1186">
    <property type="taxonomic scope" value="Bacteria"/>
</dbReference>
<dbReference type="HOGENOM" id="CLU_220733_1_1_6"/>
<dbReference type="Proteomes" id="UP000002168">
    <property type="component" value="Chromosome"/>
</dbReference>
<dbReference type="GO" id="GO:0005737">
    <property type="term" value="C:cytoplasm"/>
    <property type="evidence" value="ECO:0007669"/>
    <property type="project" value="UniProtKB-SubCell"/>
</dbReference>
<dbReference type="GO" id="GO:0016149">
    <property type="term" value="F:translation release factor activity, codon specific"/>
    <property type="evidence" value="ECO:0007669"/>
    <property type="project" value="UniProtKB-UniRule"/>
</dbReference>
<dbReference type="FunFam" id="3.30.160.20:FF:000010">
    <property type="entry name" value="Peptide chain release factor 2"/>
    <property type="match status" value="1"/>
</dbReference>
<dbReference type="Gene3D" id="3.30.160.20">
    <property type="match status" value="1"/>
</dbReference>
<dbReference type="Gene3D" id="3.30.70.1660">
    <property type="match status" value="1"/>
</dbReference>
<dbReference type="Gene3D" id="1.20.58.410">
    <property type="entry name" value="Release factor"/>
    <property type="match status" value="1"/>
</dbReference>
<dbReference type="HAMAP" id="MF_00094">
    <property type="entry name" value="Rel_fac_2"/>
    <property type="match status" value="1"/>
</dbReference>
<dbReference type="InterPro" id="IPR005139">
    <property type="entry name" value="PCRF"/>
</dbReference>
<dbReference type="InterPro" id="IPR000352">
    <property type="entry name" value="Pep_chain_release_fac_I"/>
</dbReference>
<dbReference type="InterPro" id="IPR045853">
    <property type="entry name" value="Pep_chain_release_fac_I_sf"/>
</dbReference>
<dbReference type="InterPro" id="IPR004374">
    <property type="entry name" value="PrfB"/>
</dbReference>
<dbReference type="NCBIfam" id="TIGR00020">
    <property type="entry name" value="prfB"/>
    <property type="match status" value="1"/>
</dbReference>
<dbReference type="PANTHER" id="PTHR43116:SF3">
    <property type="entry name" value="CLASS I PEPTIDE CHAIN RELEASE FACTOR"/>
    <property type="match status" value="1"/>
</dbReference>
<dbReference type="PANTHER" id="PTHR43116">
    <property type="entry name" value="PEPTIDE CHAIN RELEASE FACTOR 2"/>
    <property type="match status" value="1"/>
</dbReference>
<dbReference type="Pfam" id="PF03462">
    <property type="entry name" value="PCRF"/>
    <property type="match status" value="1"/>
</dbReference>
<dbReference type="Pfam" id="PF00472">
    <property type="entry name" value="RF-1"/>
    <property type="match status" value="1"/>
</dbReference>
<dbReference type="SMART" id="SM00937">
    <property type="entry name" value="PCRF"/>
    <property type="match status" value="1"/>
</dbReference>
<dbReference type="SUPFAM" id="SSF75620">
    <property type="entry name" value="Release factor"/>
    <property type="match status" value="1"/>
</dbReference>
<dbReference type="PROSITE" id="PS00745">
    <property type="entry name" value="RF_PROK_I"/>
    <property type="match status" value="1"/>
</dbReference>
<evidence type="ECO:0000255" key="1">
    <source>
        <dbReference type="HAMAP-Rule" id="MF_00094"/>
    </source>
</evidence>
<keyword id="KW-0963">Cytoplasm</keyword>
<keyword id="KW-0488">Methylation</keyword>
<keyword id="KW-0648">Protein biosynthesis</keyword>
<keyword id="KW-1185">Reference proteome</keyword>
<organism>
    <name type="scientific">Shewanella woodyi (strain ATCC 51908 / MS32)</name>
    <dbReference type="NCBI Taxonomy" id="392500"/>
    <lineage>
        <taxon>Bacteria</taxon>
        <taxon>Pseudomonadati</taxon>
        <taxon>Pseudomonadota</taxon>
        <taxon>Gammaproteobacteria</taxon>
        <taxon>Alteromonadales</taxon>
        <taxon>Shewanellaceae</taxon>
        <taxon>Shewanella</taxon>
    </lineage>
</organism>
<protein>
    <recommendedName>
        <fullName evidence="1">Peptide chain release factor 2</fullName>
        <shortName evidence="1">RF-2</shortName>
    </recommendedName>
</protein>
<reference key="1">
    <citation type="submission" date="2008-02" db="EMBL/GenBank/DDBJ databases">
        <title>Complete sequence of Shewanella woodyi ATCC 51908.</title>
        <authorList>
            <consortium name="US DOE Joint Genome Institute"/>
            <person name="Copeland A."/>
            <person name="Lucas S."/>
            <person name="Lapidus A."/>
            <person name="Glavina del Rio T."/>
            <person name="Dalin E."/>
            <person name="Tice H."/>
            <person name="Bruce D."/>
            <person name="Goodwin L."/>
            <person name="Pitluck S."/>
            <person name="Sims D."/>
            <person name="Brettin T."/>
            <person name="Detter J.C."/>
            <person name="Han C."/>
            <person name="Kuske C.R."/>
            <person name="Schmutz J."/>
            <person name="Larimer F."/>
            <person name="Land M."/>
            <person name="Hauser L."/>
            <person name="Kyrpides N."/>
            <person name="Lykidis A."/>
            <person name="Zhao J.-S."/>
            <person name="Richardson P."/>
        </authorList>
    </citation>
    <scope>NUCLEOTIDE SEQUENCE [LARGE SCALE GENOMIC DNA]</scope>
    <source>
        <strain>ATCC 51908 / MS32</strain>
    </source>
</reference>
<accession>B1KFR6</accession>
<proteinExistence type="inferred from homology"/>
<comment type="function">
    <text evidence="1">Peptide chain release factor 2 directs the termination of translation in response to the peptide chain termination codons UGA and UAA.</text>
</comment>
<comment type="subcellular location">
    <subcellularLocation>
        <location evidence="1">Cytoplasm</location>
    </subcellularLocation>
</comment>
<comment type="PTM">
    <text evidence="1">Methylated by PrmC. Methylation increases the termination efficiency of RF2.</text>
</comment>
<comment type="similarity">
    <text evidence="1">Belongs to the prokaryotic/mitochondrial release factor family.</text>
</comment>
<name>RF2_SHEWM</name>
<feature type="chain" id="PRO_1000093555" description="Peptide chain release factor 2">
    <location>
        <begin position="1"/>
        <end position="365"/>
    </location>
</feature>
<feature type="modified residue" description="N5-methylglutamine" evidence="1">
    <location>
        <position position="252"/>
    </location>
</feature>
<gene>
    <name evidence="1" type="primary">prfB</name>
    <name type="ordered locus">Swoo_0939</name>
</gene>